<keyword id="KW-0030">Aminoacyl-tRNA synthetase</keyword>
<keyword id="KW-0067">ATP-binding</keyword>
<keyword id="KW-0963">Cytoplasm</keyword>
<keyword id="KW-0436">Ligase</keyword>
<keyword id="KW-0547">Nucleotide-binding</keyword>
<keyword id="KW-0648">Protein biosynthesis</keyword>
<feature type="chain" id="PRO_1000009425" description="Leucine--tRNA ligase">
    <location>
        <begin position="1"/>
        <end position="859"/>
    </location>
</feature>
<feature type="short sequence motif" description="'HIGH' region">
    <location>
        <begin position="42"/>
        <end position="52"/>
    </location>
</feature>
<feature type="short sequence motif" description="'KMSKS' region">
    <location>
        <begin position="618"/>
        <end position="622"/>
    </location>
</feature>
<feature type="binding site" evidence="1">
    <location>
        <position position="621"/>
    </location>
    <ligand>
        <name>ATP</name>
        <dbReference type="ChEBI" id="CHEBI:30616"/>
    </ligand>
</feature>
<organism>
    <name type="scientific">Shewanella putrefaciens (strain CN-32 / ATCC BAA-453)</name>
    <dbReference type="NCBI Taxonomy" id="319224"/>
    <lineage>
        <taxon>Bacteria</taxon>
        <taxon>Pseudomonadati</taxon>
        <taxon>Pseudomonadota</taxon>
        <taxon>Gammaproteobacteria</taxon>
        <taxon>Alteromonadales</taxon>
        <taxon>Shewanellaceae</taxon>
        <taxon>Shewanella</taxon>
    </lineage>
</organism>
<reference key="1">
    <citation type="submission" date="2007-04" db="EMBL/GenBank/DDBJ databases">
        <title>Complete sequence of Shewanella putrefaciens CN-32.</title>
        <authorList>
            <consortium name="US DOE Joint Genome Institute"/>
            <person name="Copeland A."/>
            <person name="Lucas S."/>
            <person name="Lapidus A."/>
            <person name="Barry K."/>
            <person name="Detter J.C."/>
            <person name="Glavina del Rio T."/>
            <person name="Hammon N."/>
            <person name="Israni S."/>
            <person name="Dalin E."/>
            <person name="Tice H."/>
            <person name="Pitluck S."/>
            <person name="Chain P."/>
            <person name="Malfatti S."/>
            <person name="Shin M."/>
            <person name="Vergez L."/>
            <person name="Schmutz J."/>
            <person name="Larimer F."/>
            <person name="Land M."/>
            <person name="Hauser L."/>
            <person name="Kyrpides N."/>
            <person name="Mikhailova N."/>
            <person name="Romine M.F."/>
            <person name="Fredrickson J."/>
            <person name="Tiedje J."/>
            <person name="Richardson P."/>
        </authorList>
    </citation>
    <scope>NUCLEOTIDE SEQUENCE [LARGE SCALE GENOMIC DNA]</scope>
    <source>
        <strain>CN-32 / ATCC BAA-453</strain>
    </source>
</reference>
<comment type="catalytic activity">
    <reaction evidence="1">
        <text>tRNA(Leu) + L-leucine + ATP = L-leucyl-tRNA(Leu) + AMP + diphosphate</text>
        <dbReference type="Rhea" id="RHEA:11688"/>
        <dbReference type="Rhea" id="RHEA-COMP:9613"/>
        <dbReference type="Rhea" id="RHEA-COMP:9622"/>
        <dbReference type="ChEBI" id="CHEBI:30616"/>
        <dbReference type="ChEBI" id="CHEBI:33019"/>
        <dbReference type="ChEBI" id="CHEBI:57427"/>
        <dbReference type="ChEBI" id="CHEBI:78442"/>
        <dbReference type="ChEBI" id="CHEBI:78494"/>
        <dbReference type="ChEBI" id="CHEBI:456215"/>
        <dbReference type="EC" id="6.1.1.4"/>
    </reaction>
</comment>
<comment type="subcellular location">
    <subcellularLocation>
        <location evidence="1">Cytoplasm</location>
    </subcellularLocation>
</comment>
<comment type="similarity">
    <text evidence="1">Belongs to the class-I aminoacyl-tRNA synthetase family.</text>
</comment>
<gene>
    <name evidence="1" type="primary">leuS</name>
    <name type="ordered locus">Sputcn32_2863</name>
</gene>
<dbReference type="EC" id="6.1.1.4" evidence="1"/>
<dbReference type="EMBL" id="CP000681">
    <property type="protein sequence ID" value="ABP76582.1"/>
    <property type="molecule type" value="Genomic_DNA"/>
</dbReference>
<dbReference type="SMR" id="A4Y9E9"/>
<dbReference type="STRING" id="319224.Sputcn32_2863"/>
<dbReference type="KEGG" id="spc:Sputcn32_2863"/>
<dbReference type="eggNOG" id="COG0495">
    <property type="taxonomic scope" value="Bacteria"/>
</dbReference>
<dbReference type="HOGENOM" id="CLU_004427_0_0_6"/>
<dbReference type="GO" id="GO:0005829">
    <property type="term" value="C:cytosol"/>
    <property type="evidence" value="ECO:0007669"/>
    <property type="project" value="TreeGrafter"/>
</dbReference>
<dbReference type="GO" id="GO:0002161">
    <property type="term" value="F:aminoacyl-tRNA deacylase activity"/>
    <property type="evidence" value="ECO:0007669"/>
    <property type="project" value="InterPro"/>
</dbReference>
<dbReference type="GO" id="GO:0005524">
    <property type="term" value="F:ATP binding"/>
    <property type="evidence" value="ECO:0007669"/>
    <property type="project" value="UniProtKB-UniRule"/>
</dbReference>
<dbReference type="GO" id="GO:0004823">
    <property type="term" value="F:leucine-tRNA ligase activity"/>
    <property type="evidence" value="ECO:0007669"/>
    <property type="project" value="UniProtKB-UniRule"/>
</dbReference>
<dbReference type="GO" id="GO:0006429">
    <property type="term" value="P:leucyl-tRNA aminoacylation"/>
    <property type="evidence" value="ECO:0007669"/>
    <property type="project" value="UniProtKB-UniRule"/>
</dbReference>
<dbReference type="CDD" id="cd07958">
    <property type="entry name" value="Anticodon_Ia_Leu_BEm"/>
    <property type="match status" value="1"/>
</dbReference>
<dbReference type="CDD" id="cd00812">
    <property type="entry name" value="LeuRS_core"/>
    <property type="match status" value="1"/>
</dbReference>
<dbReference type="FunFam" id="1.10.730.10:FF:000003">
    <property type="entry name" value="Leucine--tRNA ligase"/>
    <property type="match status" value="1"/>
</dbReference>
<dbReference type="FunFam" id="2.20.28.290:FF:000001">
    <property type="entry name" value="Leucine--tRNA ligase"/>
    <property type="match status" value="1"/>
</dbReference>
<dbReference type="FunFam" id="3.10.20.590:FF:000001">
    <property type="entry name" value="Leucine--tRNA ligase"/>
    <property type="match status" value="1"/>
</dbReference>
<dbReference type="FunFam" id="3.40.50.620:FF:000003">
    <property type="entry name" value="Leucine--tRNA ligase"/>
    <property type="match status" value="1"/>
</dbReference>
<dbReference type="FunFam" id="3.40.50.620:FF:000124">
    <property type="entry name" value="Leucine--tRNA ligase"/>
    <property type="match status" value="1"/>
</dbReference>
<dbReference type="FunFam" id="3.90.740.10:FF:000012">
    <property type="entry name" value="Leucine--tRNA ligase"/>
    <property type="match status" value="1"/>
</dbReference>
<dbReference type="Gene3D" id="2.20.28.290">
    <property type="match status" value="1"/>
</dbReference>
<dbReference type="Gene3D" id="3.10.20.590">
    <property type="match status" value="1"/>
</dbReference>
<dbReference type="Gene3D" id="3.40.50.620">
    <property type="entry name" value="HUPs"/>
    <property type="match status" value="2"/>
</dbReference>
<dbReference type="Gene3D" id="1.10.730.10">
    <property type="entry name" value="Isoleucyl-tRNA Synthetase, Domain 1"/>
    <property type="match status" value="1"/>
</dbReference>
<dbReference type="HAMAP" id="MF_00049_B">
    <property type="entry name" value="Leu_tRNA_synth_B"/>
    <property type="match status" value="1"/>
</dbReference>
<dbReference type="InterPro" id="IPR001412">
    <property type="entry name" value="aa-tRNA-synth_I_CS"/>
</dbReference>
<dbReference type="InterPro" id="IPR002300">
    <property type="entry name" value="aa-tRNA-synth_Ia"/>
</dbReference>
<dbReference type="InterPro" id="IPR002302">
    <property type="entry name" value="Leu-tRNA-ligase"/>
</dbReference>
<dbReference type="InterPro" id="IPR025709">
    <property type="entry name" value="Leu_tRNA-synth_edit"/>
</dbReference>
<dbReference type="InterPro" id="IPR013155">
    <property type="entry name" value="M/V/L/I-tRNA-synth_anticd-bd"/>
</dbReference>
<dbReference type="InterPro" id="IPR015413">
    <property type="entry name" value="Methionyl/Leucyl_tRNA_Synth"/>
</dbReference>
<dbReference type="InterPro" id="IPR014729">
    <property type="entry name" value="Rossmann-like_a/b/a_fold"/>
</dbReference>
<dbReference type="InterPro" id="IPR009080">
    <property type="entry name" value="tRNAsynth_Ia_anticodon-bd"/>
</dbReference>
<dbReference type="InterPro" id="IPR009008">
    <property type="entry name" value="Val/Leu/Ile-tRNA-synth_edit"/>
</dbReference>
<dbReference type="NCBIfam" id="TIGR00396">
    <property type="entry name" value="leuS_bact"/>
    <property type="match status" value="1"/>
</dbReference>
<dbReference type="PANTHER" id="PTHR43740:SF2">
    <property type="entry name" value="LEUCINE--TRNA LIGASE, MITOCHONDRIAL"/>
    <property type="match status" value="1"/>
</dbReference>
<dbReference type="PANTHER" id="PTHR43740">
    <property type="entry name" value="LEUCYL-TRNA SYNTHETASE"/>
    <property type="match status" value="1"/>
</dbReference>
<dbReference type="Pfam" id="PF08264">
    <property type="entry name" value="Anticodon_1"/>
    <property type="match status" value="1"/>
</dbReference>
<dbReference type="Pfam" id="PF00133">
    <property type="entry name" value="tRNA-synt_1"/>
    <property type="match status" value="2"/>
</dbReference>
<dbReference type="Pfam" id="PF13603">
    <property type="entry name" value="tRNA-synt_1_2"/>
    <property type="match status" value="1"/>
</dbReference>
<dbReference type="Pfam" id="PF09334">
    <property type="entry name" value="tRNA-synt_1g"/>
    <property type="match status" value="1"/>
</dbReference>
<dbReference type="PRINTS" id="PR00985">
    <property type="entry name" value="TRNASYNTHLEU"/>
</dbReference>
<dbReference type="SUPFAM" id="SSF47323">
    <property type="entry name" value="Anticodon-binding domain of a subclass of class I aminoacyl-tRNA synthetases"/>
    <property type="match status" value="1"/>
</dbReference>
<dbReference type="SUPFAM" id="SSF52374">
    <property type="entry name" value="Nucleotidylyl transferase"/>
    <property type="match status" value="1"/>
</dbReference>
<dbReference type="SUPFAM" id="SSF50677">
    <property type="entry name" value="ValRS/IleRS/LeuRS editing domain"/>
    <property type="match status" value="1"/>
</dbReference>
<dbReference type="PROSITE" id="PS00178">
    <property type="entry name" value="AA_TRNA_LIGASE_I"/>
    <property type="match status" value="1"/>
</dbReference>
<evidence type="ECO:0000255" key="1">
    <source>
        <dbReference type="HAMAP-Rule" id="MF_00049"/>
    </source>
</evidence>
<proteinExistence type="inferred from homology"/>
<sequence>MQEQYNPSEIEALVQKHWHDNKTFEVTEDANKEKFYCLSMFPYPSGRLHMGHVRNYTIGDVVARFQRLQGKNVLQPIGWDSFGLPAENAAINNKTAPAPWTYENIEYMKNQLKLLGFGYDWSREIATCTPEYYRWEQWFFTKLYEKGLVYKKTASVNWCPNDETVLANEQVQDGCCWRCDTPVEQKEIPQWFIKITAYAEELLNDIDTLDGWPEQVKTMQRNWIGRSEGVEMTFGVAGHDKTFDIYTTRPDTLMGVTYVAIAAGHPLAEIAAQTNPELAAFIDECKNSTTSEAELATMEKRGVATGLFAIHPITGKQVPIWAANFVLMNYGTGAVMSVPGHDQRDFEFAKKYGLAIEAVIKPVDGDVDISEAAYTEKGILFNSGEFDGLDFEAGFNAIANKLVAEGKGKRQVNYRLRDWGVSRQRYWGAPIPMVTLADGTVIPTPADQLPVLLPEDVVMDGIQSPIKADKEWAKTQVNGQDALRETDTFDTFMESSWYYARYCSPQADEMLDPAKANYWLPVDQYIGGIEHACMHLLYFRFFHKLLRDAGLVNSNEPAKQLLTQGMVLADAFYYINEKGARVWVSPLDVATTEKDDKGRITKAIDKDGNELVYTGMCKMSKSKNNGIDPQVMVEKYGADTVRLFMMFASPPELTLEWQESGVEGAHRFIKRLWKLASEYIAQDNSEALDVSKLTSEQKALRREVHKTIAKVTDDIGRRQMFNTAVAAVMELMNHLQKAPQTTGQDRAIIGEALSAVMRLLYPIIPHVSFTLWNDLGNTGSIEDSQWPVVDESALVEDSKLIVVQVNGKVRAKITVAADADKDSVEALGMNDEHVIKYLDGLTVRKVIYVPGKLLSIVAN</sequence>
<name>SYL_SHEPC</name>
<protein>
    <recommendedName>
        <fullName evidence="1">Leucine--tRNA ligase</fullName>
        <ecNumber evidence="1">6.1.1.4</ecNumber>
    </recommendedName>
    <alternativeName>
        <fullName evidence="1">Leucyl-tRNA synthetase</fullName>
        <shortName evidence="1">LeuRS</shortName>
    </alternativeName>
</protein>
<accession>A4Y9E9</accession>